<keyword id="KW-0021">Allosteric enzyme</keyword>
<keyword id="KW-0963">Cytoplasm</keyword>
<keyword id="KW-0378">Hydrolase</keyword>
<keyword id="KW-0479">Metal-binding</keyword>
<keyword id="KW-0645">Protease</keyword>
<keyword id="KW-0915">Sodium</keyword>
<keyword id="KW-0346">Stress response</keyword>
<keyword id="KW-0888">Threonine protease</keyword>
<dbReference type="EC" id="3.4.25.2" evidence="1"/>
<dbReference type="EMBL" id="AP006716">
    <property type="protein sequence ID" value="BAE04970.1"/>
    <property type="molecule type" value="Genomic_DNA"/>
</dbReference>
<dbReference type="RefSeq" id="WP_011275947.1">
    <property type="nucleotide sequence ID" value="NC_007168.1"/>
</dbReference>
<dbReference type="SMR" id="Q4L5V5"/>
<dbReference type="MEROPS" id="T01.007"/>
<dbReference type="GeneID" id="93781039"/>
<dbReference type="KEGG" id="sha:SH1661"/>
<dbReference type="eggNOG" id="COG5405">
    <property type="taxonomic scope" value="Bacteria"/>
</dbReference>
<dbReference type="HOGENOM" id="CLU_093872_1_1_9"/>
<dbReference type="OrthoDB" id="9804884at2"/>
<dbReference type="Proteomes" id="UP000000543">
    <property type="component" value="Chromosome"/>
</dbReference>
<dbReference type="GO" id="GO:0009376">
    <property type="term" value="C:HslUV protease complex"/>
    <property type="evidence" value="ECO:0007669"/>
    <property type="project" value="UniProtKB-UniRule"/>
</dbReference>
<dbReference type="GO" id="GO:0005839">
    <property type="term" value="C:proteasome core complex"/>
    <property type="evidence" value="ECO:0007669"/>
    <property type="project" value="InterPro"/>
</dbReference>
<dbReference type="GO" id="GO:0046872">
    <property type="term" value="F:metal ion binding"/>
    <property type="evidence" value="ECO:0007669"/>
    <property type="project" value="UniProtKB-KW"/>
</dbReference>
<dbReference type="GO" id="GO:0004298">
    <property type="term" value="F:threonine-type endopeptidase activity"/>
    <property type="evidence" value="ECO:0007669"/>
    <property type="project" value="UniProtKB-KW"/>
</dbReference>
<dbReference type="GO" id="GO:0051603">
    <property type="term" value="P:proteolysis involved in protein catabolic process"/>
    <property type="evidence" value="ECO:0007669"/>
    <property type="project" value="InterPro"/>
</dbReference>
<dbReference type="CDD" id="cd01913">
    <property type="entry name" value="protease_HslV"/>
    <property type="match status" value="1"/>
</dbReference>
<dbReference type="Gene3D" id="3.60.20.10">
    <property type="entry name" value="Glutamine Phosphoribosylpyrophosphate, subunit 1, domain 1"/>
    <property type="match status" value="1"/>
</dbReference>
<dbReference type="HAMAP" id="MF_00248">
    <property type="entry name" value="HslV"/>
    <property type="match status" value="1"/>
</dbReference>
<dbReference type="InterPro" id="IPR022281">
    <property type="entry name" value="ATP-dep_Prtase_HsIV_su"/>
</dbReference>
<dbReference type="InterPro" id="IPR029055">
    <property type="entry name" value="Ntn_hydrolases_N"/>
</dbReference>
<dbReference type="InterPro" id="IPR001353">
    <property type="entry name" value="Proteasome_sua/b"/>
</dbReference>
<dbReference type="InterPro" id="IPR023333">
    <property type="entry name" value="Proteasome_suB-type"/>
</dbReference>
<dbReference type="NCBIfam" id="TIGR03692">
    <property type="entry name" value="ATP_dep_HslV"/>
    <property type="match status" value="1"/>
</dbReference>
<dbReference type="NCBIfam" id="NF003964">
    <property type="entry name" value="PRK05456.1"/>
    <property type="match status" value="1"/>
</dbReference>
<dbReference type="PANTHER" id="PTHR32194:SF0">
    <property type="entry name" value="ATP-DEPENDENT PROTEASE SUBUNIT HSLV"/>
    <property type="match status" value="1"/>
</dbReference>
<dbReference type="PANTHER" id="PTHR32194">
    <property type="entry name" value="METALLOPROTEASE TLDD"/>
    <property type="match status" value="1"/>
</dbReference>
<dbReference type="Pfam" id="PF00227">
    <property type="entry name" value="Proteasome"/>
    <property type="match status" value="1"/>
</dbReference>
<dbReference type="PIRSF" id="PIRSF039093">
    <property type="entry name" value="HslV"/>
    <property type="match status" value="1"/>
</dbReference>
<dbReference type="SUPFAM" id="SSF56235">
    <property type="entry name" value="N-terminal nucleophile aminohydrolases (Ntn hydrolases)"/>
    <property type="match status" value="1"/>
</dbReference>
<dbReference type="PROSITE" id="PS51476">
    <property type="entry name" value="PROTEASOME_BETA_2"/>
    <property type="match status" value="1"/>
</dbReference>
<name>HSLV_STAHJ</name>
<reference key="1">
    <citation type="journal article" date="2005" name="J. Bacteriol.">
        <title>Whole-genome sequencing of Staphylococcus haemolyticus uncovers the extreme plasticity of its genome and the evolution of human-colonizing staphylococcal species.</title>
        <authorList>
            <person name="Takeuchi F."/>
            <person name="Watanabe S."/>
            <person name="Baba T."/>
            <person name="Yuzawa H."/>
            <person name="Ito T."/>
            <person name="Morimoto Y."/>
            <person name="Kuroda M."/>
            <person name="Cui L."/>
            <person name="Takahashi M."/>
            <person name="Ankai A."/>
            <person name="Baba S."/>
            <person name="Fukui S."/>
            <person name="Lee J.C."/>
            <person name="Hiramatsu K."/>
        </authorList>
    </citation>
    <scope>NUCLEOTIDE SEQUENCE [LARGE SCALE GENOMIC DNA]</scope>
    <source>
        <strain>JCSC1435</strain>
    </source>
</reference>
<proteinExistence type="inferred from homology"/>
<organism>
    <name type="scientific">Staphylococcus haemolyticus (strain JCSC1435)</name>
    <dbReference type="NCBI Taxonomy" id="279808"/>
    <lineage>
        <taxon>Bacteria</taxon>
        <taxon>Bacillati</taxon>
        <taxon>Bacillota</taxon>
        <taxon>Bacilli</taxon>
        <taxon>Bacillales</taxon>
        <taxon>Staphylococcaceae</taxon>
        <taxon>Staphylococcus</taxon>
    </lineage>
</organism>
<evidence type="ECO:0000255" key="1">
    <source>
        <dbReference type="HAMAP-Rule" id="MF_00248"/>
    </source>
</evidence>
<accession>Q4L5V5</accession>
<gene>
    <name evidence="1" type="primary">hslV</name>
    <name type="ordered locus">SH1661</name>
</gene>
<comment type="function">
    <text evidence="1">Protease subunit of a proteasome-like degradation complex believed to be a general protein degrading machinery.</text>
</comment>
<comment type="catalytic activity">
    <reaction evidence="1">
        <text>ATP-dependent cleavage of peptide bonds with broad specificity.</text>
        <dbReference type="EC" id="3.4.25.2"/>
    </reaction>
</comment>
<comment type="activity regulation">
    <text evidence="1">Allosterically activated by HslU binding.</text>
</comment>
<comment type="subunit">
    <text evidence="1">A double ring-shaped homohexamer of HslV is capped on each side by a ring-shaped HslU homohexamer. The assembly of the HslU/HslV complex is dependent on binding of ATP.</text>
</comment>
<comment type="subcellular location">
    <subcellularLocation>
        <location evidence="1">Cytoplasm</location>
    </subcellularLocation>
</comment>
<comment type="similarity">
    <text evidence="1">Belongs to the peptidase T1B family. HslV subfamily.</text>
</comment>
<feature type="chain" id="PRO_1000012683" description="ATP-dependent protease subunit HslV">
    <location>
        <begin position="1"/>
        <end position="181"/>
    </location>
</feature>
<feature type="active site" evidence="1">
    <location>
        <position position="9"/>
    </location>
</feature>
<feature type="binding site" evidence="1">
    <location>
        <position position="166"/>
    </location>
    <ligand>
        <name>Na(+)</name>
        <dbReference type="ChEBI" id="CHEBI:29101"/>
    </ligand>
</feature>
<feature type="binding site" evidence="1">
    <location>
        <position position="169"/>
    </location>
    <ligand>
        <name>Na(+)</name>
        <dbReference type="ChEBI" id="CHEBI:29101"/>
    </ligand>
</feature>
<feature type="binding site" evidence="1">
    <location>
        <position position="172"/>
    </location>
    <ligand>
        <name>Na(+)</name>
        <dbReference type="ChEBI" id="CHEBI:29101"/>
    </ligand>
</feature>
<sequence length="181" mass="19594">MSKTSLHATTIYAVRHNGEAAMAGDGQVTLGEQVIMKQTARKVRRLYEGKVLAGFAGSVADAFTLFEKFETKLQQFSGNLERAAVELAQEWRGDKQLRQLEAMLIVMDKDAILVVSGTGEVIAPDDDLIAIGSGGNYALSAGRALKRHASQLSAKEMAYESLKVASDICVFTNDNIIVETL</sequence>
<protein>
    <recommendedName>
        <fullName evidence="1">ATP-dependent protease subunit HslV</fullName>
        <ecNumber evidence="1">3.4.25.2</ecNumber>
    </recommendedName>
</protein>